<organism>
    <name type="scientific">Salmonella paratyphi A (strain AKU_12601)</name>
    <dbReference type="NCBI Taxonomy" id="554290"/>
    <lineage>
        <taxon>Bacteria</taxon>
        <taxon>Pseudomonadati</taxon>
        <taxon>Pseudomonadota</taxon>
        <taxon>Gammaproteobacteria</taxon>
        <taxon>Enterobacterales</taxon>
        <taxon>Enterobacteriaceae</taxon>
        <taxon>Salmonella</taxon>
    </lineage>
</organism>
<protein>
    <recommendedName>
        <fullName evidence="1">Cysteine desulfuration protein SufE</fullName>
    </recommendedName>
</protein>
<evidence type="ECO:0000255" key="1">
    <source>
        <dbReference type="HAMAP-Rule" id="MF_01832"/>
    </source>
</evidence>
<gene>
    <name evidence="1" type="primary">sufE</name>
    <name type="ordered locus">SSPA1376</name>
</gene>
<keyword id="KW-0963">Cytoplasm</keyword>
<reference key="1">
    <citation type="journal article" date="2009" name="BMC Genomics">
        <title>Pseudogene accumulation in the evolutionary histories of Salmonella enterica serovars Paratyphi A and Typhi.</title>
        <authorList>
            <person name="Holt K.E."/>
            <person name="Thomson N.R."/>
            <person name="Wain J."/>
            <person name="Langridge G.C."/>
            <person name="Hasan R."/>
            <person name="Bhutta Z.A."/>
            <person name="Quail M.A."/>
            <person name="Norbertczak H."/>
            <person name="Walker D."/>
            <person name="Simmonds M."/>
            <person name="White B."/>
            <person name="Bason N."/>
            <person name="Mungall K."/>
            <person name="Dougan G."/>
            <person name="Parkhill J."/>
        </authorList>
    </citation>
    <scope>NUCLEOTIDE SEQUENCE [LARGE SCALE GENOMIC DNA]</scope>
    <source>
        <strain>AKU_12601</strain>
    </source>
</reference>
<comment type="function">
    <text evidence="1">Participates in cysteine desulfuration mediated by SufS. Cysteine desulfuration mobilizes sulfur from L-cysteine to yield L-alanine and constitutes an essential step in sulfur metabolism for biosynthesis of a variety of sulfur-containing biomolecules. Functions as a sulfur acceptor for SufS, by mediating the direct transfer of the sulfur atom from the S-sulfanylcysteine of SufS, an intermediate product of cysteine desulfuration process.</text>
</comment>
<comment type="pathway">
    <text evidence="1">Cofactor biosynthesis; iron-sulfur cluster biosynthesis.</text>
</comment>
<comment type="subunit">
    <text evidence="1">Homodimer. Interacts with SufS.</text>
</comment>
<comment type="subcellular location">
    <subcellularLocation>
        <location evidence="1">Cytoplasm</location>
    </subcellularLocation>
</comment>
<comment type="similarity">
    <text evidence="1">Belongs to the SufE family.</text>
</comment>
<name>SUFE_SALPK</name>
<feature type="chain" id="PRO_1000188336" description="Cysteine desulfuration protein SufE">
    <location>
        <begin position="1"/>
        <end position="138"/>
    </location>
</feature>
<feature type="active site" description="Cysteine persulfide intermediate" evidence="1">
    <location>
        <position position="51"/>
    </location>
</feature>
<proteinExistence type="inferred from homology"/>
<dbReference type="EMBL" id="FM200053">
    <property type="protein sequence ID" value="CAR59553.1"/>
    <property type="molecule type" value="Genomic_DNA"/>
</dbReference>
<dbReference type="RefSeq" id="WP_000729470.1">
    <property type="nucleotide sequence ID" value="NC_011147.1"/>
</dbReference>
<dbReference type="SMR" id="B5BA16"/>
<dbReference type="KEGG" id="sek:SSPA1376"/>
<dbReference type="HOGENOM" id="CLU_124502_1_1_6"/>
<dbReference type="UniPathway" id="UPA00266"/>
<dbReference type="Proteomes" id="UP000001869">
    <property type="component" value="Chromosome"/>
</dbReference>
<dbReference type="GO" id="GO:0005737">
    <property type="term" value="C:cytoplasm"/>
    <property type="evidence" value="ECO:0007669"/>
    <property type="project" value="UniProtKB-SubCell"/>
</dbReference>
<dbReference type="GO" id="GO:0016226">
    <property type="term" value="P:iron-sulfur cluster assembly"/>
    <property type="evidence" value="ECO:0007669"/>
    <property type="project" value="InterPro"/>
</dbReference>
<dbReference type="GO" id="GO:0006790">
    <property type="term" value="P:sulfur compound metabolic process"/>
    <property type="evidence" value="ECO:0007669"/>
    <property type="project" value="InterPro"/>
</dbReference>
<dbReference type="Gene3D" id="3.90.1010.10">
    <property type="match status" value="1"/>
</dbReference>
<dbReference type="HAMAP" id="MF_01832">
    <property type="entry name" value="SufE"/>
    <property type="match status" value="1"/>
</dbReference>
<dbReference type="InterPro" id="IPR023939">
    <property type="entry name" value="Cysteine_desulfuration_SufE"/>
</dbReference>
<dbReference type="InterPro" id="IPR003808">
    <property type="entry name" value="Fe-S_metab-assoc_dom"/>
</dbReference>
<dbReference type="NCBIfam" id="NF006792">
    <property type="entry name" value="PRK09296.1"/>
    <property type="match status" value="1"/>
</dbReference>
<dbReference type="PANTHER" id="PTHR43597:SF3">
    <property type="entry name" value="CYSTEINE DESULFURATION PROTEIN SUFE"/>
    <property type="match status" value="1"/>
</dbReference>
<dbReference type="PANTHER" id="PTHR43597">
    <property type="entry name" value="SULFUR ACCEPTOR PROTEIN CSDE"/>
    <property type="match status" value="1"/>
</dbReference>
<dbReference type="Pfam" id="PF02657">
    <property type="entry name" value="SufE"/>
    <property type="match status" value="1"/>
</dbReference>
<dbReference type="SUPFAM" id="SSF82649">
    <property type="entry name" value="SufE/NifU"/>
    <property type="match status" value="1"/>
</dbReference>
<sequence length="138" mass="15790">MAALPDKEKLLRNFTRCANWEEKYLYIIELGQRLAELNPQDRNPQNTIHGCQSQVWIVMRRNANGIIELQGDSDAAIVKGLMAVVFILYHQMTAQDIVHFDVRPWFEKMALTQHLTPSRSQGLEAMIRAIRAKAATLS</sequence>
<accession>B5BA16</accession>